<feature type="chain" id="PRO_0000337529" description="Elongation factor Tu 1">
    <location>
        <begin position="1"/>
        <end position="394"/>
    </location>
</feature>
<feature type="domain" description="tr-type G">
    <location>
        <begin position="10"/>
        <end position="204"/>
    </location>
</feature>
<feature type="region of interest" description="G1" evidence="1">
    <location>
        <begin position="19"/>
        <end position="26"/>
    </location>
</feature>
<feature type="region of interest" description="G2" evidence="1">
    <location>
        <begin position="60"/>
        <end position="64"/>
    </location>
</feature>
<feature type="region of interest" description="G3" evidence="1">
    <location>
        <begin position="81"/>
        <end position="84"/>
    </location>
</feature>
<feature type="region of interest" description="G4" evidence="1">
    <location>
        <begin position="136"/>
        <end position="139"/>
    </location>
</feature>
<feature type="region of interest" description="G5" evidence="1">
    <location>
        <begin position="174"/>
        <end position="176"/>
    </location>
</feature>
<feature type="binding site" evidence="2">
    <location>
        <begin position="19"/>
        <end position="26"/>
    </location>
    <ligand>
        <name>GTP</name>
        <dbReference type="ChEBI" id="CHEBI:37565"/>
    </ligand>
</feature>
<feature type="binding site" evidence="2">
    <location>
        <position position="26"/>
    </location>
    <ligand>
        <name>Mg(2+)</name>
        <dbReference type="ChEBI" id="CHEBI:18420"/>
    </ligand>
</feature>
<feature type="binding site" evidence="2">
    <location>
        <begin position="81"/>
        <end position="85"/>
    </location>
    <ligand>
        <name>GTP</name>
        <dbReference type="ChEBI" id="CHEBI:37565"/>
    </ligand>
</feature>
<feature type="binding site" evidence="2">
    <location>
        <begin position="136"/>
        <end position="139"/>
    </location>
    <ligand>
        <name>GTP</name>
        <dbReference type="ChEBI" id="CHEBI:37565"/>
    </ligand>
</feature>
<evidence type="ECO:0000250" key="1"/>
<evidence type="ECO:0000255" key="2">
    <source>
        <dbReference type="HAMAP-Rule" id="MF_00118"/>
    </source>
</evidence>
<keyword id="KW-0963">Cytoplasm</keyword>
<keyword id="KW-0251">Elongation factor</keyword>
<keyword id="KW-0342">GTP-binding</keyword>
<keyword id="KW-0378">Hydrolase</keyword>
<keyword id="KW-0460">Magnesium</keyword>
<keyword id="KW-0479">Metal-binding</keyword>
<keyword id="KW-0547">Nucleotide-binding</keyword>
<keyword id="KW-0648">Protein biosynthesis</keyword>
<keyword id="KW-1185">Reference proteome</keyword>
<reference key="1">
    <citation type="journal article" date="2002" name="Nat. Biotechnol.">
        <title>Genome sequence of the dissimilatory metal ion-reducing bacterium Shewanella oneidensis.</title>
        <authorList>
            <person name="Heidelberg J.F."/>
            <person name="Paulsen I.T."/>
            <person name="Nelson K.E."/>
            <person name="Gaidos E.J."/>
            <person name="Nelson W.C."/>
            <person name="Read T.D."/>
            <person name="Eisen J.A."/>
            <person name="Seshadri R."/>
            <person name="Ward N.L."/>
            <person name="Methe B.A."/>
            <person name="Clayton R.A."/>
            <person name="Meyer T."/>
            <person name="Tsapin A."/>
            <person name="Scott J."/>
            <person name="Beanan M.J."/>
            <person name="Brinkac L.M."/>
            <person name="Daugherty S.C."/>
            <person name="DeBoy R.T."/>
            <person name="Dodson R.J."/>
            <person name="Durkin A.S."/>
            <person name="Haft D.H."/>
            <person name="Kolonay J.F."/>
            <person name="Madupu R."/>
            <person name="Peterson J.D."/>
            <person name="Umayam L.A."/>
            <person name="White O."/>
            <person name="Wolf A.M."/>
            <person name="Vamathevan J.J."/>
            <person name="Weidman J.F."/>
            <person name="Impraim M."/>
            <person name="Lee K."/>
            <person name="Berry K.J."/>
            <person name="Lee C."/>
            <person name="Mueller J."/>
            <person name="Khouri H.M."/>
            <person name="Gill J."/>
            <person name="Utterback T.R."/>
            <person name="McDonald L.A."/>
            <person name="Feldblyum T.V."/>
            <person name="Smith H.O."/>
            <person name="Venter J.C."/>
            <person name="Nealson K.H."/>
            <person name="Fraser C.M."/>
        </authorList>
    </citation>
    <scope>NUCLEOTIDE SEQUENCE [LARGE SCALE GENOMIC DNA]</scope>
    <source>
        <strain>ATCC 700550 / JCM 31522 / CIP 106686 / LMG 19005 / NCIMB 14063 / MR-1</strain>
    </source>
</reference>
<dbReference type="EC" id="3.6.5.3" evidence="2"/>
<dbReference type="EMBL" id="AE014299">
    <property type="protein sequence ID" value="AAN53302.1"/>
    <property type="molecule type" value="Genomic_DNA"/>
</dbReference>
<dbReference type="RefSeq" id="NP_715857.1">
    <property type="nucleotide sequence ID" value="NC_004347.2"/>
</dbReference>
<dbReference type="RefSeq" id="WP_011070604.1">
    <property type="nucleotide sequence ID" value="NC_004347.2"/>
</dbReference>
<dbReference type="SMR" id="Q8EK81"/>
<dbReference type="STRING" id="211586.SO_0217"/>
<dbReference type="PaxDb" id="211586-SO_0217"/>
<dbReference type="KEGG" id="son:SO_0217"/>
<dbReference type="PATRIC" id="fig|211586.12.peg.205"/>
<dbReference type="eggNOG" id="COG0050">
    <property type="taxonomic scope" value="Bacteria"/>
</dbReference>
<dbReference type="HOGENOM" id="CLU_007265_0_1_6"/>
<dbReference type="OrthoDB" id="9803139at2"/>
<dbReference type="PhylomeDB" id="Q8EK81"/>
<dbReference type="BioCyc" id="SONE211586:G1GMP-206-MONOMER"/>
<dbReference type="Proteomes" id="UP000008186">
    <property type="component" value="Chromosome"/>
</dbReference>
<dbReference type="GO" id="GO:0005737">
    <property type="term" value="C:cytoplasm"/>
    <property type="evidence" value="ECO:0007669"/>
    <property type="project" value="UniProtKB-SubCell"/>
</dbReference>
<dbReference type="GO" id="GO:0005525">
    <property type="term" value="F:GTP binding"/>
    <property type="evidence" value="ECO:0007669"/>
    <property type="project" value="UniProtKB-UniRule"/>
</dbReference>
<dbReference type="GO" id="GO:0003924">
    <property type="term" value="F:GTPase activity"/>
    <property type="evidence" value="ECO:0007669"/>
    <property type="project" value="InterPro"/>
</dbReference>
<dbReference type="GO" id="GO:0097216">
    <property type="term" value="F:guanosine tetraphosphate binding"/>
    <property type="evidence" value="ECO:0007669"/>
    <property type="project" value="UniProtKB-ARBA"/>
</dbReference>
<dbReference type="GO" id="GO:0003746">
    <property type="term" value="F:translation elongation factor activity"/>
    <property type="evidence" value="ECO:0000318"/>
    <property type="project" value="GO_Central"/>
</dbReference>
<dbReference type="GO" id="GO:0006414">
    <property type="term" value="P:translational elongation"/>
    <property type="evidence" value="ECO:0000318"/>
    <property type="project" value="GO_Central"/>
</dbReference>
<dbReference type="CDD" id="cd01884">
    <property type="entry name" value="EF_Tu"/>
    <property type="match status" value="1"/>
</dbReference>
<dbReference type="CDD" id="cd03697">
    <property type="entry name" value="EFTU_II"/>
    <property type="match status" value="1"/>
</dbReference>
<dbReference type="CDD" id="cd03707">
    <property type="entry name" value="EFTU_III"/>
    <property type="match status" value="1"/>
</dbReference>
<dbReference type="FunFam" id="2.40.30.10:FF:000001">
    <property type="entry name" value="Elongation factor Tu"/>
    <property type="match status" value="1"/>
</dbReference>
<dbReference type="FunFam" id="3.40.50.300:FF:000003">
    <property type="entry name" value="Elongation factor Tu"/>
    <property type="match status" value="1"/>
</dbReference>
<dbReference type="Gene3D" id="3.40.50.300">
    <property type="entry name" value="P-loop containing nucleotide triphosphate hydrolases"/>
    <property type="match status" value="1"/>
</dbReference>
<dbReference type="Gene3D" id="2.40.30.10">
    <property type="entry name" value="Translation factors"/>
    <property type="match status" value="2"/>
</dbReference>
<dbReference type="HAMAP" id="MF_00118_B">
    <property type="entry name" value="EF_Tu_B"/>
    <property type="match status" value="1"/>
</dbReference>
<dbReference type="InterPro" id="IPR041709">
    <property type="entry name" value="EF-Tu_GTP-bd"/>
</dbReference>
<dbReference type="InterPro" id="IPR050055">
    <property type="entry name" value="EF-Tu_GTPase"/>
</dbReference>
<dbReference type="InterPro" id="IPR004161">
    <property type="entry name" value="EFTu-like_2"/>
</dbReference>
<dbReference type="InterPro" id="IPR033720">
    <property type="entry name" value="EFTU_2"/>
</dbReference>
<dbReference type="InterPro" id="IPR031157">
    <property type="entry name" value="G_TR_CS"/>
</dbReference>
<dbReference type="InterPro" id="IPR027417">
    <property type="entry name" value="P-loop_NTPase"/>
</dbReference>
<dbReference type="InterPro" id="IPR005225">
    <property type="entry name" value="Small_GTP-bd"/>
</dbReference>
<dbReference type="InterPro" id="IPR000795">
    <property type="entry name" value="T_Tr_GTP-bd_dom"/>
</dbReference>
<dbReference type="InterPro" id="IPR009000">
    <property type="entry name" value="Transl_B-barrel_sf"/>
</dbReference>
<dbReference type="InterPro" id="IPR009001">
    <property type="entry name" value="Transl_elong_EF1A/Init_IF2_C"/>
</dbReference>
<dbReference type="InterPro" id="IPR004541">
    <property type="entry name" value="Transl_elong_EFTu/EF1A_bac/org"/>
</dbReference>
<dbReference type="InterPro" id="IPR004160">
    <property type="entry name" value="Transl_elong_EFTu/EF1A_C"/>
</dbReference>
<dbReference type="NCBIfam" id="TIGR00485">
    <property type="entry name" value="EF-Tu"/>
    <property type="match status" value="1"/>
</dbReference>
<dbReference type="NCBIfam" id="NF000766">
    <property type="entry name" value="PRK00049.1"/>
    <property type="match status" value="1"/>
</dbReference>
<dbReference type="NCBIfam" id="NF009372">
    <property type="entry name" value="PRK12735.1"/>
    <property type="match status" value="1"/>
</dbReference>
<dbReference type="NCBIfam" id="NF009373">
    <property type="entry name" value="PRK12736.1"/>
    <property type="match status" value="1"/>
</dbReference>
<dbReference type="NCBIfam" id="TIGR00231">
    <property type="entry name" value="small_GTP"/>
    <property type="match status" value="1"/>
</dbReference>
<dbReference type="PANTHER" id="PTHR43721:SF22">
    <property type="entry name" value="ELONGATION FACTOR TU, MITOCHONDRIAL"/>
    <property type="match status" value="1"/>
</dbReference>
<dbReference type="PANTHER" id="PTHR43721">
    <property type="entry name" value="ELONGATION FACTOR TU-RELATED"/>
    <property type="match status" value="1"/>
</dbReference>
<dbReference type="Pfam" id="PF00009">
    <property type="entry name" value="GTP_EFTU"/>
    <property type="match status" value="1"/>
</dbReference>
<dbReference type="Pfam" id="PF03144">
    <property type="entry name" value="GTP_EFTU_D2"/>
    <property type="match status" value="1"/>
</dbReference>
<dbReference type="Pfam" id="PF03143">
    <property type="entry name" value="GTP_EFTU_D3"/>
    <property type="match status" value="1"/>
</dbReference>
<dbReference type="PRINTS" id="PR00315">
    <property type="entry name" value="ELONGATNFCT"/>
</dbReference>
<dbReference type="SUPFAM" id="SSF50465">
    <property type="entry name" value="EF-Tu/eEF-1alpha/eIF2-gamma C-terminal domain"/>
    <property type="match status" value="1"/>
</dbReference>
<dbReference type="SUPFAM" id="SSF52540">
    <property type="entry name" value="P-loop containing nucleoside triphosphate hydrolases"/>
    <property type="match status" value="1"/>
</dbReference>
<dbReference type="SUPFAM" id="SSF50447">
    <property type="entry name" value="Translation proteins"/>
    <property type="match status" value="1"/>
</dbReference>
<dbReference type="PROSITE" id="PS00301">
    <property type="entry name" value="G_TR_1"/>
    <property type="match status" value="1"/>
</dbReference>
<dbReference type="PROSITE" id="PS51722">
    <property type="entry name" value="G_TR_2"/>
    <property type="match status" value="1"/>
</dbReference>
<comment type="function">
    <text evidence="2">GTP hydrolase that promotes the GTP-dependent binding of aminoacyl-tRNA to the A-site of ribosomes during protein biosynthesis.</text>
</comment>
<comment type="catalytic activity">
    <reaction evidence="2">
        <text>GTP + H2O = GDP + phosphate + H(+)</text>
        <dbReference type="Rhea" id="RHEA:19669"/>
        <dbReference type="ChEBI" id="CHEBI:15377"/>
        <dbReference type="ChEBI" id="CHEBI:15378"/>
        <dbReference type="ChEBI" id="CHEBI:37565"/>
        <dbReference type="ChEBI" id="CHEBI:43474"/>
        <dbReference type="ChEBI" id="CHEBI:58189"/>
        <dbReference type="EC" id="3.6.5.3"/>
    </reaction>
    <physiologicalReaction direction="left-to-right" evidence="2">
        <dbReference type="Rhea" id="RHEA:19670"/>
    </physiologicalReaction>
</comment>
<comment type="subunit">
    <text evidence="2">Monomer.</text>
</comment>
<comment type="subcellular location">
    <subcellularLocation>
        <location evidence="2">Cytoplasm</location>
    </subcellularLocation>
</comment>
<comment type="similarity">
    <text evidence="2">Belongs to the TRAFAC class translation factor GTPase superfamily. Classic translation factor GTPase family. EF-Tu/EF-1A subfamily.</text>
</comment>
<protein>
    <recommendedName>
        <fullName evidence="2">Elongation factor Tu 1</fullName>
        <shortName evidence="2">EF-Tu 1</shortName>
        <ecNumber evidence="2">3.6.5.3</ecNumber>
    </recommendedName>
</protein>
<organism>
    <name type="scientific">Shewanella oneidensis (strain ATCC 700550 / JCM 31522 / CIP 106686 / LMG 19005 / NCIMB 14063 / MR-1)</name>
    <dbReference type="NCBI Taxonomy" id="211586"/>
    <lineage>
        <taxon>Bacteria</taxon>
        <taxon>Pseudomonadati</taxon>
        <taxon>Pseudomonadota</taxon>
        <taxon>Gammaproteobacteria</taxon>
        <taxon>Alteromonadales</taxon>
        <taxon>Shewanellaceae</taxon>
        <taxon>Shewanella</taxon>
    </lineage>
</organism>
<accession>Q8EK81</accession>
<name>EFTU1_SHEON</name>
<sequence>MAKAKFERSKPHVNVGTIGHVDHGKTTLTAAISHVLAKTYGGEAKDFSQIDNAPEERERGITINTSHIEYDTPSRHYAHVDCPGHADYVKNMITGAAQMDGAILVVASTDGPMPQTREHILLSRQVGVPFIIVFMNKCDMVDDAELLELVEMEVRELLSEYDFPGDDLPVIQGSALKALEGEPEWEAKILELAAALDSYIPEPERDIDKPFLMPIEDVFSISGRGTVVTGRVERGIVRVGDEVEIVGIRTTTKTTCTGVEMFRKLLDEGRAGENCGILLRGTKRDDVERGQVLSKPGSINPHTTFESEVYVLSKEEGGRHTPFFKGYRPQFYFRTTDVTGTIELPEGVEMVMPGDNIKMKVTLICPIAMDEGLRFAIREGGRTVGAGVVAKIFA</sequence>
<proteinExistence type="inferred from homology"/>
<gene>
    <name evidence="2" type="primary">tuf1</name>
    <name type="synonym">tufB</name>
    <name type="ordered locus">SO_0217</name>
</gene>